<gene>
    <name type="primary">sigL</name>
    <name type="ordered locus">BSU34200</name>
</gene>
<keyword id="KW-0238">DNA-binding</keyword>
<keyword id="KW-0240">DNA-directed RNA polymerase</keyword>
<keyword id="KW-0548">Nucleotidyltransferase</keyword>
<keyword id="KW-1185">Reference proteome</keyword>
<keyword id="KW-0731">Sigma factor</keyword>
<keyword id="KW-0804">Transcription</keyword>
<keyword id="KW-0805">Transcription regulation</keyword>
<keyword id="KW-0808">Transferase</keyword>
<evidence type="ECO:0000250" key="1"/>
<evidence type="ECO:0000269" key="2">
    <source>
    </source>
</evidence>
<evidence type="ECO:0000305" key="3"/>
<evidence type="ECO:0000305" key="4">
    <source>
    </source>
</evidence>
<protein>
    <recommendedName>
        <fullName>RNA polymerase sigma-54 factor</fullName>
    </recommendedName>
</protein>
<feature type="chain" id="PRO_0000205526" description="RNA polymerase sigma-54 factor">
    <location>
        <begin position="1"/>
        <end position="436"/>
    </location>
</feature>
<feature type="DNA-binding region" description="H-T-H motif" evidence="1">
    <location>
        <begin position="324"/>
        <end position="343"/>
    </location>
</feature>
<feature type="short sequence motif" description="RPON box">
    <location>
        <begin position="413"/>
        <end position="421"/>
    </location>
</feature>
<name>RP54_BACSU</name>
<organism>
    <name type="scientific">Bacillus subtilis (strain 168)</name>
    <dbReference type="NCBI Taxonomy" id="224308"/>
    <lineage>
        <taxon>Bacteria</taxon>
        <taxon>Bacillati</taxon>
        <taxon>Bacillota</taxon>
        <taxon>Bacilli</taxon>
        <taxon>Bacillales</taxon>
        <taxon>Bacillaceae</taxon>
        <taxon>Bacillus</taxon>
    </lineage>
</organism>
<sequence>MDMKLQQVQVLKPQLTQELRQAITLLGYHSAELAEYIDELSLENPLIERKETDTPPLSYHKTNKNRMNAQEAGLQLSNPQKTLQDALKQQSLDMNLTNTEKKIFNYLIHSLDSNGYLEEDIEEAARRLSVSAKEAEAVLAKLQSLEPAGIGARSLQECILLQLQRLPNRNEQAEMLVSAHFDAFAQKKWKTLSVETGIPLHTIQDISDDIAALHPRPGLLFARPEQDVYIEPDIFITVKNGHIAAELNTRSFPEIDLHPQYRTLLSSGSCQDTVSYLSAKYQEWRWLSRALRQRKQTITRIINELITRQKDFFLKGRSAMKPLTLREVADCLSLHESTVSRAIKGKTIQTPYGLFEMKLFFSAKAEASGDGDASNYAVKTHLENLINQEDKTKPLSDQKLVDLLYEQHGIQISRRTVAKYRDQMNIPSSAARKRYK</sequence>
<proteinExistence type="evidence at protein level"/>
<comment type="function">
    <text evidence="2">Sigma factors are initiation factors that promote the attachment of RNA polymerase (RNAP) to specific initiation sites and are then released. This sigma factor is responsible for the expression of the levanase operon. The open complex (sigma-54 and core RNA polymerase) serves as the receptor for receipt of the melting signal from the remotely bound activator protein LevR for the expression of the levanase operon. Associates with the RNAP core only in stationary phase cells (PubMed:21710567).</text>
</comment>
<comment type="subunit">
    <text evidence="4">Interacts transiently with the RNAP core.</text>
</comment>
<comment type="induction">
    <text evidence="2">Association with RNAP core increases slightly during late sporulation but not tested stresses (at protein level).</text>
</comment>
<comment type="similarity">
    <text evidence="3">Belongs to the sigma-54 factor family.</text>
</comment>
<accession>P24219</accession>
<dbReference type="EMBL" id="M73443">
    <property type="protein sequence ID" value="AAA22753.1"/>
    <property type="molecule type" value="Genomic_DNA"/>
</dbReference>
<dbReference type="EMBL" id="Z71928">
    <property type="protein sequence ID" value="CAA96485.1"/>
    <property type="molecule type" value="Genomic_DNA"/>
</dbReference>
<dbReference type="EMBL" id="Z94043">
    <property type="protein sequence ID" value="CAB08001.1"/>
    <property type="molecule type" value="Genomic_DNA"/>
</dbReference>
<dbReference type="EMBL" id="AL009126">
    <property type="protein sequence ID" value="CAB15425.1"/>
    <property type="molecule type" value="Genomic_DNA"/>
</dbReference>
<dbReference type="PIR" id="A41229">
    <property type="entry name" value="A41229"/>
</dbReference>
<dbReference type="RefSeq" id="NP_391300.1">
    <property type="nucleotide sequence ID" value="NC_000964.3"/>
</dbReference>
<dbReference type="SMR" id="P24219"/>
<dbReference type="FunCoup" id="P24219">
    <property type="interactions" value="316"/>
</dbReference>
<dbReference type="STRING" id="224308.BSU34200"/>
<dbReference type="PaxDb" id="224308-BSU34200"/>
<dbReference type="DNASU" id="936362"/>
<dbReference type="EnsemblBacteria" id="CAB15425">
    <property type="protein sequence ID" value="CAB15425"/>
    <property type="gene ID" value="BSU_34200"/>
</dbReference>
<dbReference type="GeneID" id="936362"/>
<dbReference type="KEGG" id="bsu:BSU34200"/>
<dbReference type="PATRIC" id="fig|224308.179.peg.3707"/>
<dbReference type="eggNOG" id="COG1508">
    <property type="taxonomic scope" value="Bacteria"/>
</dbReference>
<dbReference type="InParanoid" id="P24219"/>
<dbReference type="OrthoDB" id="9814402at2"/>
<dbReference type="PhylomeDB" id="P24219"/>
<dbReference type="BioCyc" id="BSUB:BSU34200-MONOMER"/>
<dbReference type="Proteomes" id="UP000001570">
    <property type="component" value="Chromosome"/>
</dbReference>
<dbReference type="GO" id="GO:0000428">
    <property type="term" value="C:DNA-directed RNA polymerase complex"/>
    <property type="evidence" value="ECO:0007669"/>
    <property type="project" value="UniProtKB-KW"/>
</dbReference>
<dbReference type="GO" id="GO:0032993">
    <property type="term" value="C:protein-DNA complex"/>
    <property type="evidence" value="ECO:0000318"/>
    <property type="project" value="GO_Central"/>
</dbReference>
<dbReference type="GO" id="GO:0001216">
    <property type="term" value="F:DNA-binding transcription activator activity"/>
    <property type="evidence" value="ECO:0000318"/>
    <property type="project" value="GO_Central"/>
</dbReference>
<dbReference type="GO" id="GO:0016779">
    <property type="term" value="F:nucleotidyltransferase activity"/>
    <property type="evidence" value="ECO:0007669"/>
    <property type="project" value="UniProtKB-KW"/>
</dbReference>
<dbReference type="GO" id="GO:0016987">
    <property type="term" value="F:sigma factor activity"/>
    <property type="evidence" value="ECO:0007669"/>
    <property type="project" value="UniProtKB-KW"/>
</dbReference>
<dbReference type="GO" id="GO:0000976">
    <property type="term" value="F:transcription cis-regulatory region binding"/>
    <property type="evidence" value="ECO:0000318"/>
    <property type="project" value="GO_Central"/>
</dbReference>
<dbReference type="GO" id="GO:0006352">
    <property type="term" value="P:DNA-templated transcription initiation"/>
    <property type="evidence" value="ECO:0007669"/>
    <property type="project" value="InterPro"/>
</dbReference>
<dbReference type="GO" id="GO:0006355">
    <property type="term" value="P:regulation of DNA-templated transcription"/>
    <property type="evidence" value="ECO:0000318"/>
    <property type="project" value="GO_Central"/>
</dbReference>
<dbReference type="Gene3D" id="1.10.10.60">
    <property type="entry name" value="Homeodomain-like"/>
    <property type="match status" value="1"/>
</dbReference>
<dbReference type="Gene3D" id="1.10.10.1330">
    <property type="entry name" value="RNA polymerase sigma-54 factor, core-binding domain"/>
    <property type="match status" value="1"/>
</dbReference>
<dbReference type="InterPro" id="IPR000394">
    <property type="entry name" value="RNA_pol_sigma_54"/>
</dbReference>
<dbReference type="InterPro" id="IPR007046">
    <property type="entry name" value="RNA_pol_sigma_54_core-bd"/>
</dbReference>
<dbReference type="InterPro" id="IPR007634">
    <property type="entry name" value="RNA_pol_sigma_54_DNA-bd"/>
</dbReference>
<dbReference type="InterPro" id="IPR038709">
    <property type="entry name" value="RpoN_core-bd_sf"/>
</dbReference>
<dbReference type="NCBIfam" id="TIGR02395">
    <property type="entry name" value="rpoN_sigma"/>
    <property type="match status" value="1"/>
</dbReference>
<dbReference type="PANTHER" id="PTHR32248">
    <property type="entry name" value="RNA POLYMERASE SIGMA-54 FACTOR"/>
    <property type="match status" value="1"/>
</dbReference>
<dbReference type="PANTHER" id="PTHR32248:SF4">
    <property type="entry name" value="RNA POLYMERASE SIGMA-54 FACTOR"/>
    <property type="match status" value="1"/>
</dbReference>
<dbReference type="Pfam" id="PF00309">
    <property type="entry name" value="Sigma54_AID"/>
    <property type="match status" value="1"/>
</dbReference>
<dbReference type="Pfam" id="PF04963">
    <property type="entry name" value="Sigma54_CBD"/>
    <property type="match status" value="1"/>
</dbReference>
<dbReference type="Pfam" id="PF04552">
    <property type="entry name" value="Sigma54_DBD"/>
    <property type="match status" value="1"/>
</dbReference>
<dbReference type="PIRSF" id="PIRSF000774">
    <property type="entry name" value="RpoN"/>
    <property type="match status" value="1"/>
</dbReference>
<dbReference type="PRINTS" id="PR00045">
    <property type="entry name" value="SIGMA54FCT"/>
</dbReference>
<dbReference type="PROSITE" id="PS00717">
    <property type="entry name" value="SIGMA54_1"/>
    <property type="match status" value="1"/>
</dbReference>
<dbReference type="PROSITE" id="PS00718">
    <property type="entry name" value="SIGMA54_2"/>
    <property type="match status" value="1"/>
</dbReference>
<dbReference type="PROSITE" id="PS50044">
    <property type="entry name" value="SIGMA54_3"/>
    <property type="match status" value="1"/>
</dbReference>
<reference key="1">
    <citation type="journal article" date="1991" name="Proc. Natl. Acad. Sci. U.S.A.">
        <title>The Bacillus subtilis sigL gene encodes an equivalent of sigma 54 from Gram-negative bacteria.</title>
        <authorList>
            <person name="Debarbouille M."/>
            <person name="Martin-Verstraete I."/>
            <person name="Kunst F."/>
            <person name="Rapoport G."/>
        </authorList>
    </citation>
    <scope>NUCLEOTIDE SEQUENCE [GENOMIC DNA]</scope>
    <source>
        <strain>168 / Marburg / ATCC 6051 / DSM 10 / JCM 1465 / NBRC 13719 / NCIMB 3610 / NRRL NRS-744 / VKM B-501</strain>
    </source>
</reference>
<reference key="2">
    <citation type="journal article" date="1996" name="Microbiology">
        <title>Integrated mapping and sequencing of a 115 kb DNA fragment from Bacillus subtilis: sequence analysis of a 21 kb segment containing the sigL locus.</title>
        <authorList>
            <person name="Fabret C."/>
            <person name="Quentin Y."/>
            <person name="Chapal N."/>
            <person name="Guiseppi A."/>
            <person name="Haiech J."/>
            <person name="Denizot F."/>
        </authorList>
    </citation>
    <scope>NUCLEOTIDE SEQUENCE [GENOMIC DNA]</scope>
    <source>
        <strain>168</strain>
    </source>
</reference>
<reference key="3">
    <citation type="submission" date="1997-04" db="EMBL/GenBank/DDBJ databases">
        <authorList>
            <person name="Denizot F."/>
        </authorList>
    </citation>
    <scope>NUCLEOTIDE SEQUENCE [GENOMIC DNA]</scope>
    <source>
        <strain>168</strain>
    </source>
</reference>
<reference key="4">
    <citation type="journal article" date="1997" name="Nature">
        <title>The complete genome sequence of the Gram-positive bacterium Bacillus subtilis.</title>
        <authorList>
            <person name="Kunst F."/>
            <person name="Ogasawara N."/>
            <person name="Moszer I."/>
            <person name="Albertini A.M."/>
            <person name="Alloni G."/>
            <person name="Azevedo V."/>
            <person name="Bertero M.G."/>
            <person name="Bessieres P."/>
            <person name="Bolotin A."/>
            <person name="Borchert S."/>
            <person name="Borriss R."/>
            <person name="Boursier L."/>
            <person name="Brans A."/>
            <person name="Braun M."/>
            <person name="Brignell S.C."/>
            <person name="Bron S."/>
            <person name="Brouillet S."/>
            <person name="Bruschi C.V."/>
            <person name="Caldwell B."/>
            <person name="Capuano V."/>
            <person name="Carter N.M."/>
            <person name="Choi S.-K."/>
            <person name="Codani J.-J."/>
            <person name="Connerton I.F."/>
            <person name="Cummings N.J."/>
            <person name="Daniel R.A."/>
            <person name="Denizot F."/>
            <person name="Devine K.M."/>
            <person name="Duesterhoeft A."/>
            <person name="Ehrlich S.D."/>
            <person name="Emmerson P.T."/>
            <person name="Entian K.-D."/>
            <person name="Errington J."/>
            <person name="Fabret C."/>
            <person name="Ferrari E."/>
            <person name="Foulger D."/>
            <person name="Fritz C."/>
            <person name="Fujita M."/>
            <person name="Fujita Y."/>
            <person name="Fuma S."/>
            <person name="Galizzi A."/>
            <person name="Galleron N."/>
            <person name="Ghim S.-Y."/>
            <person name="Glaser P."/>
            <person name="Goffeau A."/>
            <person name="Golightly E.J."/>
            <person name="Grandi G."/>
            <person name="Guiseppi G."/>
            <person name="Guy B.J."/>
            <person name="Haga K."/>
            <person name="Haiech J."/>
            <person name="Harwood C.R."/>
            <person name="Henaut A."/>
            <person name="Hilbert H."/>
            <person name="Holsappel S."/>
            <person name="Hosono S."/>
            <person name="Hullo M.-F."/>
            <person name="Itaya M."/>
            <person name="Jones L.-M."/>
            <person name="Joris B."/>
            <person name="Karamata D."/>
            <person name="Kasahara Y."/>
            <person name="Klaerr-Blanchard M."/>
            <person name="Klein C."/>
            <person name="Kobayashi Y."/>
            <person name="Koetter P."/>
            <person name="Koningstein G."/>
            <person name="Krogh S."/>
            <person name="Kumano M."/>
            <person name="Kurita K."/>
            <person name="Lapidus A."/>
            <person name="Lardinois S."/>
            <person name="Lauber J."/>
            <person name="Lazarevic V."/>
            <person name="Lee S.-M."/>
            <person name="Levine A."/>
            <person name="Liu H."/>
            <person name="Masuda S."/>
            <person name="Mauel C."/>
            <person name="Medigue C."/>
            <person name="Medina N."/>
            <person name="Mellado R.P."/>
            <person name="Mizuno M."/>
            <person name="Moestl D."/>
            <person name="Nakai S."/>
            <person name="Noback M."/>
            <person name="Noone D."/>
            <person name="O'Reilly M."/>
            <person name="Ogawa K."/>
            <person name="Ogiwara A."/>
            <person name="Oudega B."/>
            <person name="Park S.-H."/>
            <person name="Parro V."/>
            <person name="Pohl T.M."/>
            <person name="Portetelle D."/>
            <person name="Porwollik S."/>
            <person name="Prescott A.M."/>
            <person name="Presecan E."/>
            <person name="Pujic P."/>
            <person name="Purnelle B."/>
            <person name="Rapoport G."/>
            <person name="Rey M."/>
            <person name="Reynolds S."/>
            <person name="Rieger M."/>
            <person name="Rivolta C."/>
            <person name="Rocha E."/>
            <person name="Roche B."/>
            <person name="Rose M."/>
            <person name="Sadaie Y."/>
            <person name="Sato T."/>
            <person name="Scanlan E."/>
            <person name="Schleich S."/>
            <person name="Schroeter R."/>
            <person name="Scoffone F."/>
            <person name="Sekiguchi J."/>
            <person name="Sekowska A."/>
            <person name="Seror S.J."/>
            <person name="Serror P."/>
            <person name="Shin B.-S."/>
            <person name="Soldo B."/>
            <person name="Sorokin A."/>
            <person name="Tacconi E."/>
            <person name="Takagi T."/>
            <person name="Takahashi H."/>
            <person name="Takemaru K."/>
            <person name="Takeuchi M."/>
            <person name="Tamakoshi A."/>
            <person name="Tanaka T."/>
            <person name="Terpstra P."/>
            <person name="Tognoni A."/>
            <person name="Tosato V."/>
            <person name="Uchiyama S."/>
            <person name="Vandenbol M."/>
            <person name="Vannier F."/>
            <person name="Vassarotti A."/>
            <person name="Viari A."/>
            <person name="Wambutt R."/>
            <person name="Wedler E."/>
            <person name="Wedler H."/>
            <person name="Weitzenegger T."/>
            <person name="Winters P."/>
            <person name="Wipat A."/>
            <person name="Yamamoto H."/>
            <person name="Yamane K."/>
            <person name="Yasumoto K."/>
            <person name="Yata K."/>
            <person name="Yoshida K."/>
            <person name="Yoshikawa H.-F."/>
            <person name="Zumstein E."/>
            <person name="Yoshikawa H."/>
            <person name="Danchin A."/>
        </authorList>
    </citation>
    <scope>NUCLEOTIDE SEQUENCE [LARGE SCALE GENOMIC DNA]</scope>
    <source>
        <strain>168</strain>
    </source>
</reference>
<reference key="5">
    <citation type="journal article" date="2011" name="Proteomics">
        <title>The dynamic protein partnership of RNA polymerase in Bacillus subtilis.</title>
        <authorList>
            <person name="Delumeau O."/>
            <person name="Lecointe F."/>
            <person name="Muntel J."/>
            <person name="Guillot A."/>
            <person name="Guedon E."/>
            <person name="Monnet V."/>
            <person name="Hecker M."/>
            <person name="Becher D."/>
            <person name="Polard P."/>
            <person name="Noirot P."/>
        </authorList>
    </citation>
    <scope>FUNCTION</scope>
    <scope>SUBUNIT</scope>
    <scope>INDUCTION</scope>
    <source>
        <strain>168</strain>
    </source>
</reference>